<protein>
    <recommendedName>
        <fullName evidence="1">S-adenosylmethionine decarboxylase proenzyme</fullName>
        <shortName evidence="1">AdoMetDC</shortName>
        <shortName evidence="1">SAMDC</shortName>
        <ecNumber evidence="1">4.1.1.50</ecNumber>
    </recommendedName>
    <component>
        <recommendedName>
            <fullName evidence="1">S-adenosylmethionine decarboxylase beta chain</fullName>
        </recommendedName>
    </component>
    <component>
        <recommendedName>
            <fullName evidence="1">S-adenosylmethionine decarboxylase alpha chain</fullName>
        </recommendedName>
    </component>
</protein>
<keyword id="KW-0068">Autocatalytic cleavage</keyword>
<keyword id="KW-0210">Decarboxylase</keyword>
<keyword id="KW-0456">Lyase</keyword>
<keyword id="KW-0620">Polyamine biosynthesis</keyword>
<keyword id="KW-0670">Pyruvate</keyword>
<keyword id="KW-1185">Reference proteome</keyword>
<keyword id="KW-0949">S-adenosyl-L-methionine</keyword>
<keyword id="KW-0704">Schiff base</keyword>
<keyword id="KW-0745">Spermidine biosynthesis</keyword>
<keyword id="KW-0865">Zymogen</keyword>
<accession>Q9YED6</accession>
<comment type="function">
    <text evidence="1">Catalyzes the decarboxylation of S-adenosylmethionine to S-adenosylmethioninamine (dcAdoMet), the propylamine donor required for the synthesis of the polyamines spermine and spermidine from the diamine putrescine.</text>
</comment>
<comment type="catalytic activity">
    <reaction evidence="1">
        <text>S-adenosyl-L-methionine + H(+) = S-adenosyl 3-(methylsulfanyl)propylamine + CO2</text>
        <dbReference type="Rhea" id="RHEA:15981"/>
        <dbReference type="ChEBI" id="CHEBI:15378"/>
        <dbReference type="ChEBI" id="CHEBI:16526"/>
        <dbReference type="ChEBI" id="CHEBI:57443"/>
        <dbReference type="ChEBI" id="CHEBI:59789"/>
        <dbReference type="EC" id="4.1.1.50"/>
    </reaction>
</comment>
<comment type="cofactor">
    <cofactor evidence="1">
        <name>pyruvate</name>
        <dbReference type="ChEBI" id="CHEBI:15361"/>
    </cofactor>
    <text evidence="1">Binds 1 pyruvoyl group covalently per subunit.</text>
</comment>
<comment type="pathway">
    <text evidence="1">Amine and polyamine biosynthesis; S-adenosylmethioninamine biosynthesis; S-adenosylmethioninamine from S-adenosyl-L-methionine: step 1/1.</text>
</comment>
<comment type="subunit">
    <text evidence="1">Heterotetramer of two alpha and two beta chains arranged as a dimer of alpha/beta heterodimers.</text>
</comment>
<comment type="PTM">
    <text evidence="1">Is synthesized initially as an inactive proenzyme. Formation of the active enzyme involves a self-maturation process in which the active site pyruvoyl group is generated from an internal serine residue via an autocatalytic post-translational modification. Two non-identical subunits are generated from the proenzyme in this reaction, and the pyruvate is formed at the N-terminus of the alpha chain, which is derived from the carboxyl end of the proenzyme. The post-translation cleavage follows an unusual pathway, termed non-hydrolytic serinolysis, in which the side chain hydroxyl group of the serine supplies its oxygen atom to form the C-terminus of the beta chain, while the remainder of the serine residue undergoes an oxidative deamination to produce ammonia and the pyruvoyl group blocking the N-terminus of the alpha chain.</text>
</comment>
<comment type="similarity">
    <text evidence="1">Belongs to the prokaryotic AdoMetDC family. Type 1 subfamily.</text>
</comment>
<proteinExistence type="inferred from homology"/>
<evidence type="ECO:0000255" key="1">
    <source>
        <dbReference type="HAMAP-Rule" id="MF_00464"/>
    </source>
</evidence>
<name>SPEH_AERPE</name>
<reference key="1">
    <citation type="journal article" date="1999" name="DNA Res.">
        <title>Complete genome sequence of an aerobic hyper-thermophilic crenarchaeon, Aeropyrum pernix K1.</title>
        <authorList>
            <person name="Kawarabayasi Y."/>
            <person name="Hino Y."/>
            <person name="Horikawa H."/>
            <person name="Yamazaki S."/>
            <person name="Haikawa Y."/>
            <person name="Jin-no K."/>
            <person name="Takahashi M."/>
            <person name="Sekine M."/>
            <person name="Baba S."/>
            <person name="Ankai A."/>
            <person name="Kosugi H."/>
            <person name="Hosoyama A."/>
            <person name="Fukui S."/>
            <person name="Nagai Y."/>
            <person name="Nishijima K."/>
            <person name="Nakazawa H."/>
            <person name="Takamiya M."/>
            <person name="Masuda S."/>
            <person name="Funahashi T."/>
            <person name="Tanaka T."/>
            <person name="Kudoh Y."/>
            <person name="Yamazaki J."/>
            <person name="Kushida N."/>
            <person name="Oguchi A."/>
            <person name="Aoki K."/>
            <person name="Kubota K."/>
            <person name="Nakamura Y."/>
            <person name="Nomura N."/>
            <person name="Sako Y."/>
            <person name="Kikuchi H."/>
        </authorList>
    </citation>
    <scope>NUCLEOTIDE SEQUENCE [LARGE SCALE GENOMIC DNA]</scope>
    <source>
        <strain>ATCC 700893 / DSM 11879 / JCM 9820 / NBRC 100138 / K1</strain>
    </source>
</reference>
<sequence length="130" mass="14365">MAQIPSSRTNGSGAQMRVFGLHVYGNFYECANTELLKSPEELEKVVLEAAREGGMTVLDIKSWKIGEGVSVVAIILESHITVHTWPEYRFATVDVYSCGGHTNPHRAFEVLAEALKPARVEKGVAERHLE</sequence>
<organism>
    <name type="scientific">Aeropyrum pernix (strain ATCC 700893 / DSM 11879 / JCM 9820 / NBRC 100138 / K1)</name>
    <dbReference type="NCBI Taxonomy" id="272557"/>
    <lineage>
        <taxon>Archaea</taxon>
        <taxon>Thermoproteota</taxon>
        <taxon>Thermoprotei</taxon>
        <taxon>Desulfurococcales</taxon>
        <taxon>Desulfurococcaceae</taxon>
        <taxon>Aeropyrum</taxon>
    </lineage>
</organism>
<dbReference type="EC" id="4.1.1.50" evidence="1"/>
<dbReference type="EMBL" id="BA000002">
    <property type="protein sequence ID" value="BAA79610.2"/>
    <property type="molecule type" value="Genomic_DNA"/>
</dbReference>
<dbReference type="PIR" id="B72651">
    <property type="entry name" value="B72651"/>
</dbReference>
<dbReference type="RefSeq" id="WP_010865876.1">
    <property type="nucleotide sequence ID" value="NC_000854.2"/>
</dbReference>
<dbReference type="SMR" id="Q9YED6"/>
<dbReference type="STRING" id="272557.APE_0639.1"/>
<dbReference type="EnsemblBacteria" id="BAA79610">
    <property type="protein sequence ID" value="BAA79610"/>
    <property type="gene ID" value="APE_0639.1"/>
</dbReference>
<dbReference type="GeneID" id="1444783"/>
<dbReference type="KEGG" id="ape:APE_0639.1"/>
<dbReference type="PATRIC" id="fig|272557.25.peg.464"/>
<dbReference type="eggNOG" id="arCOG00279">
    <property type="taxonomic scope" value="Archaea"/>
</dbReference>
<dbReference type="UniPathway" id="UPA00331">
    <property type="reaction ID" value="UER00451"/>
</dbReference>
<dbReference type="Proteomes" id="UP000002518">
    <property type="component" value="Chromosome"/>
</dbReference>
<dbReference type="GO" id="GO:0005829">
    <property type="term" value="C:cytosol"/>
    <property type="evidence" value="ECO:0007669"/>
    <property type="project" value="TreeGrafter"/>
</dbReference>
<dbReference type="GO" id="GO:0004014">
    <property type="term" value="F:adenosylmethionine decarboxylase activity"/>
    <property type="evidence" value="ECO:0007669"/>
    <property type="project" value="UniProtKB-UniRule"/>
</dbReference>
<dbReference type="GO" id="GO:0008295">
    <property type="term" value="P:spermidine biosynthetic process"/>
    <property type="evidence" value="ECO:0007669"/>
    <property type="project" value="UniProtKB-UniRule"/>
</dbReference>
<dbReference type="Gene3D" id="3.60.90.10">
    <property type="entry name" value="S-adenosylmethionine decarboxylase"/>
    <property type="match status" value="1"/>
</dbReference>
<dbReference type="HAMAP" id="MF_00464">
    <property type="entry name" value="AdoMetDC_1"/>
    <property type="match status" value="1"/>
</dbReference>
<dbReference type="InterPro" id="IPR003826">
    <property type="entry name" value="AdoMetDC_fam_prok"/>
</dbReference>
<dbReference type="InterPro" id="IPR016067">
    <property type="entry name" value="S-AdoMet_deCO2ase_core"/>
</dbReference>
<dbReference type="InterPro" id="IPR017716">
    <property type="entry name" value="S-AdoMet_deCOase_pro-enz"/>
</dbReference>
<dbReference type="NCBIfam" id="TIGR03330">
    <property type="entry name" value="SAM_DCase_Bsu"/>
    <property type="match status" value="1"/>
</dbReference>
<dbReference type="PANTHER" id="PTHR33866">
    <property type="entry name" value="S-ADENOSYLMETHIONINE DECARBOXYLASE PROENZYME"/>
    <property type="match status" value="1"/>
</dbReference>
<dbReference type="PANTHER" id="PTHR33866:SF2">
    <property type="entry name" value="S-ADENOSYLMETHIONINE DECARBOXYLASE PROENZYME"/>
    <property type="match status" value="1"/>
</dbReference>
<dbReference type="Pfam" id="PF02675">
    <property type="entry name" value="AdoMet_dc"/>
    <property type="match status" value="1"/>
</dbReference>
<dbReference type="SUPFAM" id="SSF56276">
    <property type="entry name" value="S-adenosylmethionine decarboxylase"/>
    <property type="match status" value="1"/>
</dbReference>
<gene>
    <name evidence="1" type="primary">speH</name>
    <name type="ordered locus">APE_0639.1</name>
</gene>
<feature type="chain" id="PRO_0000030127" description="S-adenosylmethionine decarboxylase beta chain" evidence="1">
    <location>
        <begin position="1"/>
        <end position="77"/>
    </location>
</feature>
<feature type="chain" id="PRO_0000030128" description="S-adenosylmethionine decarboxylase alpha chain" evidence="1">
    <location>
        <begin position="78"/>
        <end position="130"/>
    </location>
</feature>
<feature type="active site" description="Schiff-base intermediate with substrate; via pyruvic acid" evidence="1">
    <location>
        <position position="78"/>
    </location>
</feature>
<feature type="active site" description="Proton acceptor; for processing activity" evidence="1">
    <location>
        <position position="83"/>
    </location>
</feature>
<feature type="active site" description="Proton donor; for catalytic activity" evidence="1">
    <location>
        <position position="98"/>
    </location>
</feature>
<feature type="site" description="Cleavage (non-hydrolytic); by autolysis" evidence="1">
    <location>
        <begin position="77"/>
        <end position="78"/>
    </location>
</feature>
<feature type="modified residue" description="Pyruvic acid (Ser); by autocatalysis" evidence="1">
    <location>
        <position position="78"/>
    </location>
</feature>